<reference key="1">
    <citation type="journal article" date="2003" name="Nat. Biotechnol.">
        <title>The genome sequence of the entomopathogenic bacterium Photorhabdus luminescens.</title>
        <authorList>
            <person name="Duchaud E."/>
            <person name="Rusniok C."/>
            <person name="Frangeul L."/>
            <person name="Buchrieser C."/>
            <person name="Givaudan A."/>
            <person name="Taourit S."/>
            <person name="Bocs S."/>
            <person name="Boursaux-Eude C."/>
            <person name="Chandler M."/>
            <person name="Charles J.-F."/>
            <person name="Dassa E."/>
            <person name="Derose R."/>
            <person name="Derzelle S."/>
            <person name="Freyssinet G."/>
            <person name="Gaudriault S."/>
            <person name="Medigue C."/>
            <person name="Lanois A."/>
            <person name="Powell K."/>
            <person name="Siguier P."/>
            <person name="Vincent R."/>
            <person name="Wingate V."/>
            <person name="Zouine M."/>
            <person name="Glaser P."/>
            <person name="Boemare N."/>
            <person name="Danchin A."/>
            <person name="Kunst F."/>
        </authorList>
    </citation>
    <scope>NUCLEOTIDE SEQUENCE [LARGE SCALE GENOMIC DNA]</scope>
    <source>
        <strain>DSM 15139 / CIP 105565 / TT01</strain>
    </source>
</reference>
<organism>
    <name type="scientific">Photorhabdus laumondii subsp. laumondii (strain DSM 15139 / CIP 105565 / TT01)</name>
    <name type="common">Photorhabdus luminescens subsp. laumondii</name>
    <dbReference type="NCBI Taxonomy" id="243265"/>
    <lineage>
        <taxon>Bacteria</taxon>
        <taxon>Pseudomonadati</taxon>
        <taxon>Pseudomonadota</taxon>
        <taxon>Gammaproteobacteria</taxon>
        <taxon>Enterobacterales</taxon>
        <taxon>Morganellaceae</taxon>
        <taxon>Photorhabdus</taxon>
    </lineage>
</organism>
<dbReference type="EC" id="2.7.1.189" evidence="1"/>
<dbReference type="EMBL" id="BX571869">
    <property type="protein sequence ID" value="CAE15515.1"/>
    <property type="molecule type" value="Genomic_DNA"/>
</dbReference>
<dbReference type="RefSeq" id="WP_011147352.1">
    <property type="nucleotide sequence ID" value="NC_005126.1"/>
</dbReference>
<dbReference type="SMR" id="Q7N2E1"/>
<dbReference type="STRING" id="243265.plu3141"/>
<dbReference type="GeneID" id="48849400"/>
<dbReference type="KEGG" id="plu:plu3141"/>
<dbReference type="eggNOG" id="COG1070">
    <property type="taxonomic scope" value="Bacteria"/>
</dbReference>
<dbReference type="HOGENOM" id="CLU_009281_3_4_6"/>
<dbReference type="OrthoDB" id="9805576at2"/>
<dbReference type="Proteomes" id="UP000002514">
    <property type="component" value="Chromosome"/>
</dbReference>
<dbReference type="GO" id="GO:0005737">
    <property type="term" value="C:cytoplasm"/>
    <property type="evidence" value="ECO:0007669"/>
    <property type="project" value="UniProtKB-SubCell"/>
</dbReference>
<dbReference type="GO" id="GO:0071518">
    <property type="term" value="F:autoinducer-2 kinase activity"/>
    <property type="evidence" value="ECO:0007669"/>
    <property type="project" value="UniProtKB-UniRule"/>
</dbReference>
<dbReference type="GO" id="GO:0005975">
    <property type="term" value="P:carbohydrate metabolic process"/>
    <property type="evidence" value="ECO:0007669"/>
    <property type="project" value="InterPro"/>
</dbReference>
<dbReference type="GO" id="GO:0009372">
    <property type="term" value="P:quorum sensing"/>
    <property type="evidence" value="ECO:0007669"/>
    <property type="project" value="InterPro"/>
</dbReference>
<dbReference type="CDD" id="cd07775">
    <property type="entry name" value="ASKHA_NBD_FGGY_AI-2K"/>
    <property type="match status" value="1"/>
</dbReference>
<dbReference type="Gene3D" id="3.30.420.40">
    <property type="match status" value="2"/>
</dbReference>
<dbReference type="HAMAP" id="MF_02053">
    <property type="entry name" value="LsrK"/>
    <property type="match status" value="1"/>
</dbReference>
<dbReference type="InterPro" id="IPR033676">
    <property type="entry name" value="AI-2_kinase"/>
</dbReference>
<dbReference type="InterPro" id="IPR043129">
    <property type="entry name" value="ATPase_NBD"/>
</dbReference>
<dbReference type="InterPro" id="IPR000577">
    <property type="entry name" value="Carb_kinase_FGGY"/>
</dbReference>
<dbReference type="InterPro" id="IPR018485">
    <property type="entry name" value="FGGY_C"/>
</dbReference>
<dbReference type="InterPro" id="IPR050406">
    <property type="entry name" value="FGGY_Carb_Kinase"/>
</dbReference>
<dbReference type="InterPro" id="IPR018484">
    <property type="entry name" value="FGGY_N"/>
</dbReference>
<dbReference type="NCBIfam" id="NF008187">
    <property type="entry name" value="PRK10939.1"/>
    <property type="match status" value="1"/>
</dbReference>
<dbReference type="PANTHER" id="PTHR43095:SF1">
    <property type="entry name" value="AUTOINDUCER-2 KINASE"/>
    <property type="match status" value="1"/>
</dbReference>
<dbReference type="PANTHER" id="PTHR43095">
    <property type="entry name" value="SUGAR KINASE"/>
    <property type="match status" value="1"/>
</dbReference>
<dbReference type="Pfam" id="PF02782">
    <property type="entry name" value="FGGY_C"/>
    <property type="match status" value="1"/>
</dbReference>
<dbReference type="Pfam" id="PF00370">
    <property type="entry name" value="FGGY_N"/>
    <property type="match status" value="1"/>
</dbReference>
<dbReference type="PIRSF" id="PIRSF000538">
    <property type="entry name" value="GlpK"/>
    <property type="match status" value="1"/>
</dbReference>
<dbReference type="SUPFAM" id="SSF53067">
    <property type="entry name" value="Actin-like ATPase domain"/>
    <property type="match status" value="2"/>
</dbReference>
<protein>
    <recommendedName>
        <fullName evidence="1">Autoinducer-2 kinase</fullName>
        <shortName evidence="1">AI-2 kinase</shortName>
        <ecNumber evidence="1">2.7.1.189</ecNumber>
    </recommendedName>
</protein>
<keyword id="KW-0963">Cytoplasm</keyword>
<keyword id="KW-0418">Kinase</keyword>
<keyword id="KW-1185">Reference proteome</keyword>
<keyword id="KW-0808">Transferase</keyword>
<accession>Q7N2E1</accession>
<evidence type="ECO:0000255" key="1">
    <source>
        <dbReference type="HAMAP-Rule" id="MF_02053"/>
    </source>
</evidence>
<feature type="chain" id="PRO_0000351594" description="Autoinducer-2 kinase">
    <location>
        <begin position="1"/>
        <end position="530"/>
    </location>
</feature>
<comment type="function">
    <text evidence="1">Catalyzes the phosphorylation of autoinducer-2 (AI-2) to phospho-AI-2, which subsequently inactivates the transcriptional regulator LsrR and leads to the transcription of the lsr operon. Phosphorylates the ring-open form of (S)-4,5-dihydroxypentane-2,3-dione (DPD), which is the precursor to all AI-2 signaling molecules, at the C5 position.</text>
</comment>
<comment type="catalytic activity">
    <reaction evidence="1">
        <text>(S)-4,5-dihydroxypentane-2,3-dione + ATP = (2S)-2-hydroxy-3,4-dioxopentyl phosphate + ADP + H(+)</text>
        <dbReference type="Rhea" id="RHEA:15377"/>
        <dbReference type="ChEBI" id="CHEBI:15378"/>
        <dbReference type="ChEBI" id="CHEBI:29484"/>
        <dbReference type="ChEBI" id="CHEBI:30616"/>
        <dbReference type="ChEBI" id="CHEBI:71677"/>
        <dbReference type="ChEBI" id="CHEBI:456216"/>
        <dbReference type="EC" id="2.7.1.189"/>
    </reaction>
</comment>
<comment type="subcellular location">
    <subcellularLocation>
        <location evidence="1">Cytoplasm</location>
    </subcellularLocation>
</comment>
<comment type="similarity">
    <text evidence="1">Belongs to the FGGY kinase family.</text>
</comment>
<sequence length="530" mass="57381">MNQRRSANPSGKYLMALDAGTGSVRAVIFDLEGNQIAAGQAEWIHQPVPDVPGSMEFDLATNWQLVCQCIRQALKTAQLPASAIQGVASCSMREGIVLYNRNGEPIWACANVDARSSQEVSELKALYDSTFEYDVYRCSGQTLALGAMPRLLWLAHHRPDIYHQATALTMISDWLANMLSGELAVDPSNAGTTGMLDLVSRDWRPDLLEMAGLRSDILSPVKETGTLLGYVTEKAAVQCGLNIGTPVIMGGGDVQLGCLGLGVVKPAQTAVIGGTFWQQVVNLPEPVTDPNMNTRINPHVIPGMVQAESISFFTGLTMRWFRDAFCAEEKLLAERLGVDTYSLLEDMAARVPAGAYGVIPIFSDVMRFKAWYHAAPSFINLSIDPEKCNKATLFRALEENAAIVSACNLDLISAFSAVKPDSLVFAGGGSKGKLWSQILSDVTGLPVRVPMVKESTALGCAIAAGVGVGLYDAMGATGEKLVRWQHEYQPNPEHCEVYQKAKQDWQAIYADQLTLVDHGLTTSLWKAPGL</sequence>
<name>LSRK_PHOLL</name>
<proteinExistence type="inferred from homology"/>
<gene>
    <name evidence="1" type="primary">lsrK</name>
    <name type="ordered locus">plu3141</name>
</gene>